<geneLocation type="plasmid">
    <name>megaplasmid MP1</name>
</geneLocation>
<protein>
    <recommendedName>
        <fullName evidence="1">Potassium-transporting ATPase ATP-binding subunit</fullName>
        <ecNumber evidence="1">7.2.2.6</ecNumber>
    </recommendedName>
    <alternativeName>
        <fullName evidence="1">ATP phosphohydrolase [potassium-transporting] B chain</fullName>
    </alternativeName>
    <alternativeName>
        <fullName evidence="1">Potassium-binding and translocating subunit B</fullName>
    </alternativeName>
    <alternativeName>
        <fullName evidence="1">Potassium-translocating ATPase B chain</fullName>
    </alternativeName>
</protein>
<proteinExistence type="inferred from homology"/>
<accession>Q9RZP0</accession>
<evidence type="ECO:0000255" key="1">
    <source>
        <dbReference type="HAMAP-Rule" id="MF_00285"/>
    </source>
</evidence>
<comment type="function">
    <text evidence="1">Part of the high-affinity ATP-driven potassium transport (or Kdp) system, which catalyzes the hydrolysis of ATP coupled with the electrogenic transport of potassium into the cytoplasm. This subunit is responsible for energy coupling to the transport system and for the release of the potassium ions to the cytoplasm.</text>
</comment>
<comment type="catalytic activity">
    <reaction evidence="1">
        <text>K(+)(out) + ATP + H2O = K(+)(in) + ADP + phosphate + H(+)</text>
        <dbReference type="Rhea" id="RHEA:16777"/>
        <dbReference type="ChEBI" id="CHEBI:15377"/>
        <dbReference type="ChEBI" id="CHEBI:15378"/>
        <dbReference type="ChEBI" id="CHEBI:29103"/>
        <dbReference type="ChEBI" id="CHEBI:30616"/>
        <dbReference type="ChEBI" id="CHEBI:43474"/>
        <dbReference type="ChEBI" id="CHEBI:456216"/>
        <dbReference type="EC" id="7.2.2.6"/>
    </reaction>
    <physiologicalReaction direction="left-to-right" evidence="1">
        <dbReference type="Rhea" id="RHEA:16778"/>
    </physiologicalReaction>
</comment>
<comment type="subunit">
    <text evidence="1">The system is composed of three essential subunits: KdpA, KdpB and KdpC.</text>
</comment>
<comment type="subcellular location">
    <subcellularLocation>
        <location evidence="1">Cell membrane</location>
        <topology evidence="1">Multi-pass membrane protein</topology>
    </subcellularLocation>
</comment>
<comment type="similarity">
    <text evidence="1">Belongs to the cation transport ATPase (P-type) (TC 3.A.3) family. Type IA subfamily.</text>
</comment>
<organism>
    <name type="scientific">Deinococcus radiodurans (strain ATCC 13939 / DSM 20539 / JCM 16871 / CCUG 27074 / LMG 4051 / NBRC 15346 / NCIMB 9279 / VKM B-1422 / R1)</name>
    <dbReference type="NCBI Taxonomy" id="243230"/>
    <lineage>
        <taxon>Bacteria</taxon>
        <taxon>Thermotogati</taxon>
        <taxon>Deinococcota</taxon>
        <taxon>Deinococci</taxon>
        <taxon>Deinococcales</taxon>
        <taxon>Deinococcaceae</taxon>
        <taxon>Deinococcus</taxon>
    </lineage>
</organism>
<sequence length="675" mass="70302">MTTAPQPKQSIFSPELVRGAVRASFAKLSPRDQARNPVMFVVYLGTALTAYLTVANLVTGKPWGYELAITLLLLLTVLFANFAEGMAEARGKAQAASLRSAREDVKARRLVNGQEELVAGTALERGDLVVVEAGEMIPADGEIVEGLASVDESAITGESAPVIREAGTDHSGVTGGTKVLSDRIVIQITSGAGESFLDRMIALVEGASRQKTPNEIALSILLSGLTLIFLLAVVTLYPFTVYAGAPASAVTLIALLVCLIPTTIGGLLPAIGIAGMDRALQANVIAKSGKAVEVAGDVDVLLLDKTGTITIGNRMATKFHPLPGVTEAELAKAALLSSLADPTPEGKSIVALARQLGVDAPEPAGAEFIEFTAQTRMSGVDFPGTSIRKGAGSRISALAQERGGQLPPELAAITDEVSRQGATPLTVIENDRLLGVVALSDIIKPGIRERFEQLRRMGLRTVMITGDNPLTAEAIAKEAGVDGFLAEATPEDKMEMIKQEQASGKLVAMMGDGTNDAPALAQADVGLAMNSGTQAAKEAGNMVDLDSDPTKLLEVVEIGKGLLITRGALTTFSIANDVAKYFAILPALFVTAYPQLGVLNVMGLHSPTSAVLSAVIFNALIIPVLIPLALRGVPYQPMSAGALLNRNLLVYGGGGILVPFIAIKLIDLLIGGLMS</sequence>
<feature type="chain" id="PRO_0000046114" description="Potassium-transporting ATPase ATP-binding subunit">
    <location>
        <begin position="1"/>
        <end position="675"/>
    </location>
</feature>
<feature type="transmembrane region" description="Helical" evidence="1">
    <location>
        <begin position="38"/>
        <end position="58"/>
    </location>
</feature>
<feature type="transmembrane region" description="Helical" evidence="1">
    <location>
        <begin position="67"/>
        <end position="87"/>
    </location>
</feature>
<feature type="transmembrane region" description="Helical" evidence="1">
    <location>
        <begin position="216"/>
        <end position="236"/>
    </location>
</feature>
<feature type="transmembrane region" description="Helical" evidence="1">
    <location>
        <begin position="253"/>
        <end position="273"/>
    </location>
</feature>
<feature type="transmembrane region" description="Helical" evidence="1">
    <location>
        <begin position="582"/>
        <end position="602"/>
    </location>
</feature>
<feature type="transmembrane region" description="Helical" evidence="1">
    <location>
        <begin position="610"/>
        <end position="630"/>
    </location>
</feature>
<feature type="transmembrane region" description="Helical" evidence="1">
    <location>
        <begin position="654"/>
        <end position="674"/>
    </location>
</feature>
<feature type="active site" description="4-aspartylphosphate intermediate" evidence="1">
    <location>
        <position position="304"/>
    </location>
</feature>
<feature type="binding site" evidence="1">
    <location>
        <position position="341"/>
    </location>
    <ligand>
        <name>ATP</name>
        <dbReference type="ChEBI" id="CHEBI:30616"/>
    </ligand>
</feature>
<feature type="binding site" evidence="1">
    <location>
        <position position="345"/>
    </location>
    <ligand>
        <name>ATP</name>
        <dbReference type="ChEBI" id="CHEBI:30616"/>
    </ligand>
</feature>
<feature type="binding site" evidence="1">
    <location>
        <begin position="371"/>
        <end position="378"/>
    </location>
    <ligand>
        <name>ATP</name>
        <dbReference type="ChEBI" id="CHEBI:30616"/>
    </ligand>
</feature>
<feature type="binding site" evidence="1">
    <location>
        <position position="389"/>
    </location>
    <ligand>
        <name>ATP</name>
        <dbReference type="ChEBI" id="CHEBI:30616"/>
    </ligand>
</feature>
<feature type="binding site" evidence="1">
    <location>
        <position position="512"/>
    </location>
    <ligand>
        <name>Mg(2+)</name>
        <dbReference type="ChEBI" id="CHEBI:18420"/>
    </ligand>
</feature>
<feature type="binding site" evidence="1">
    <location>
        <position position="516"/>
    </location>
    <ligand>
        <name>Mg(2+)</name>
        <dbReference type="ChEBI" id="CHEBI:18420"/>
    </ligand>
</feature>
<reference key="1">
    <citation type="journal article" date="1999" name="Science">
        <title>Genome sequence of the radioresistant bacterium Deinococcus radiodurans R1.</title>
        <authorList>
            <person name="White O."/>
            <person name="Eisen J.A."/>
            <person name="Heidelberg J.F."/>
            <person name="Hickey E.K."/>
            <person name="Peterson J.D."/>
            <person name="Dodson R.J."/>
            <person name="Haft D.H."/>
            <person name="Gwinn M.L."/>
            <person name="Nelson W.C."/>
            <person name="Richardson D.L."/>
            <person name="Moffat K.S."/>
            <person name="Qin H."/>
            <person name="Jiang L."/>
            <person name="Pamphile W."/>
            <person name="Crosby M."/>
            <person name="Shen M."/>
            <person name="Vamathevan J.J."/>
            <person name="Lam P."/>
            <person name="McDonald L.A."/>
            <person name="Utterback T.R."/>
            <person name="Zalewski C."/>
            <person name="Makarova K.S."/>
            <person name="Aravind L."/>
            <person name="Daly M.J."/>
            <person name="Minton K.W."/>
            <person name="Fleischmann R.D."/>
            <person name="Ketchum K.A."/>
            <person name="Nelson K.E."/>
            <person name="Salzberg S.L."/>
            <person name="Smith H.O."/>
            <person name="Venter J.C."/>
            <person name="Fraser C.M."/>
        </authorList>
    </citation>
    <scope>NUCLEOTIDE SEQUENCE [LARGE SCALE GENOMIC DNA]</scope>
    <source>
        <strain>ATCC 13939 / DSM 20539 / JCM 16871 / CCUG 27074 / LMG 4051 / NBRC 15346 / NCIMB 9279 / VKM B-1422 / R1</strain>
    </source>
</reference>
<name>KDPB_DEIRA</name>
<gene>
    <name evidence="1" type="primary">kdpB</name>
    <name type="ordered locus">DR_B0083</name>
</gene>
<keyword id="KW-0067">ATP-binding</keyword>
<keyword id="KW-1003">Cell membrane</keyword>
<keyword id="KW-0406">Ion transport</keyword>
<keyword id="KW-0460">Magnesium</keyword>
<keyword id="KW-0472">Membrane</keyword>
<keyword id="KW-0479">Metal-binding</keyword>
<keyword id="KW-0547">Nucleotide-binding</keyword>
<keyword id="KW-0597">Phosphoprotein</keyword>
<keyword id="KW-0614">Plasmid</keyword>
<keyword id="KW-0630">Potassium</keyword>
<keyword id="KW-0633">Potassium transport</keyword>
<keyword id="KW-1185">Reference proteome</keyword>
<keyword id="KW-1278">Translocase</keyword>
<keyword id="KW-0812">Transmembrane</keyword>
<keyword id="KW-1133">Transmembrane helix</keyword>
<keyword id="KW-0813">Transport</keyword>
<dbReference type="EC" id="7.2.2.6" evidence="1"/>
<dbReference type="EMBL" id="AE001826">
    <property type="protein sequence ID" value="AAF12535.1"/>
    <property type="molecule type" value="Genomic_DNA"/>
</dbReference>
<dbReference type="PIR" id="A75627">
    <property type="entry name" value="A75627"/>
</dbReference>
<dbReference type="RefSeq" id="NP_051616.1">
    <property type="nucleotide sequence ID" value="NC_000958.1"/>
</dbReference>
<dbReference type="RefSeq" id="WP_010883953.1">
    <property type="nucleotide sequence ID" value="NC_000958.1"/>
</dbReference>
<dbReference type="SMR" id="Q9RZP0"/>
<dbReference type="EnsemblBacteria" id="AAF12535">
    <property type="protein sequence ID" value="AAF12535"/>
    <property type="gene ID" value="DR_B0083"/>
</dbReference>
<dbReference type="GeneID" id="69519333"/>
<dbReference type="KEGG" id="dra:DR_B0083"/>
<dbReference type="PATRIC" id="fig|243230.17.peg.83"/>
<dbReference type="HOGENOM" id="CLU_025728_2_0_0"/>
<dbReference type="InParanoid" id="Q9RZP0"/>
<dbReference type="OrthoDB" id="73457at2"/>
<dbReference type="BRENDA" id="7.2.2.6">
    <property type="organism ID" value="1856"/>
</dbReference>
<dbReference type="Proteomes" id="UP000002524">
    <property type="component" value="Plasmid MP1"/>
</dbReference>
<dbReference type="GO" id="GO:0005886">
    <property type="term" value="C:plasma membrane"/>
    <property type="evidence" value="ECO:0000318"/>
    <property type="project" value="GO_Central"/>
</dbReference>
<dbReference type="GO" id="GO:0031004">
    <property type="term" value="C:potassium ion-transporting ATPase complex"/>
    <property type="evidence" value="ECO:0000318"/>
    <property type="project" value="GO_Central"/>
</dbReference>
<dbReference type="GO" id="GO:1903103">
    <property type="term" value="C:potassium:proton antiporter complex"/>
    <property type="evidence" value="ECO:0000318"/>
    <property type="project" value="GO_Central"/>
</dbReference>
<dbReference type="GO" id="GO:0005524">
    <property type="term" value="F:ATP binding"/>
    <property type="evidence" value="ECO:0007669"/>
    <property type="project" value="UniProtKB-UniRule"/>
</dbReference>
<dbReference type="GO" id="GO:0016887">
    <property type="term" value="F:ATP hydrolysis activity"/>
    <property type="evidence" value="ECO:0007669"/>
    <property type="project" value="InterPro"/>
</dbReference>
<dbReference type="GO" id="GO:0000287">
    <property type="term" value="F:magnesium ion binding"/>
    <property type="evidence" value="ECO:0007669"/>
    <property type="project" value="UniProtKB-UniRule"/>
</dbReference>
<dbReference type="GO" id="GO:0008556">
    <property type="term" value="F:P-type potassium transmembrane transporter activity"/>
    <property type="evidence" value="ECO:0000318"/>
    <property type="project" value="GO_Central"/>
</dbReference>
<dbReference type="GO" id="GO:0071805">
    <property type="term" value="P:potassium ion transmembrane transport"/>
    <property type="evidence" value="ECO:0000318"/>
    <property type="project" value="GO_Central"/>
</dbReference>
<dbReference type="CDD" id="cd02078">
    <property type="entry name" value="P-type_ATPase_K"/>
    <property type="match status" value="1"/>
</dbReference>
<dbReference type="FunFam" id="2.70.150.10:FF:000033">
    <property type="entry name" value="Potassium-transporting ATPase ATP-binding subunit"/>
    <property type="match status" value="1"/>
</dbReference>
<dbReference type="FunFam" id="3.40.1110.10:FF:000007">
    <property type="entry name" value="Potassium-transporting ATPase ATP-binding subunit"/>
    <property type="match status" value="1"/>
</dbReference>
<dbReference type="Gene3D" id="3.40.1110.10">
    <property type="entry name" value="Calcium-transporting ATPase, cytoplasmic domain N"/>
    <property type="match status" value="1"/>
</dbReference>
<dbReference type="Gene3D" id="2.70.150.10">
    <property type="entry name" value="Calcium-transporting ATPase, cytoplasmic transduction domain A"/>
    <property type="match status" value="1"/>
</dbReference>
<dbReference type="Gene3D" id="3.40.50.1000">
    <property type="entry name" value="HAD superfamily/HAD-like"/>
    <property type="match status" value="1"/>
</dbReference>
<dbReference type="HAMAP" id="MF_00285">
    <property type="entry name" value="KdpB"/>
    <property type="match status" value="1"/>
</dbReference>
<dbReference type="InterPro" id="IPR023299">
    <property type="entry name" value="ATPase_P-typ_cyto_dom_N"/>
</dbReference>
<dbReference type="InterPro" id="IPR018303">
    <property type="entry name" value="ATPase_P-typ_P_site"/>
</dbReference>
<dbReference type="InterPro" id="IPR023298">
    <property type="entry name" value="ATPase_P-typ_TM_dom_sf"/>
</dbReference>
<dbReference type="InterPro" id="IPR008250">
    <property type="entry name" value="ATPase_P-typ_transduc_dom_A_sf"/>
</dbReference>
<dbReference type="InterPro" id="IPR036412">
    <property type="entry name" value="HAD-like_sf"/>
</dbReference>
<dbReference type="InterPro" id="IPR023214">
    <property type="entry name" value="HAD_sf"/>
</dbReference>
<dbReference type="InterPro" id="IPR006391">
    <property type="entry name" value="P-type_ATPase_bsu_IA"/>
</dbReference>
<dbReference type="InterPro" id="IPR001757">
    <property type="entry name" value="P_typ_ATPase"/>
</dbReference>
<dbReference type="InterPro" id="IPR044492">
    <property type="entry name" value="P_typ_ATPase_HD_dom"/>
</dbReference>
<dbReference type="NCBIfam" id="TIGR01494">
    <property type="entry name" value="ATPase_P-type"/>
    <property type="match status" value="2"/>
</dbReference>
<dbReference type="NCBIfam" id="TIGR01497">
    <property type="entry name" value="kdpB"/>
    <property type="match status" value="1"/>
</dbReference>
<dbReference type="PANTHER" id="PTHR43743">
    <property type="entry name" value="POTASSIUM-TRANSPORTING ATPASE ATP-BINDING SUBUNIT"/>
    <property type="match status" value="1"/>
</dbReference>
<dbReference type="PANTHER" id="PTHR43743:SF1">
    <property type="entry name" value="POTASSIUM-TRANSPORTING ATPASE ATP-BINDING SUBUNIT"/>
    <property type="match status" value="1"/>
</dbReference>
<dbReference type="Pfam" id="PF00122">
    <property type="entry name" value="E1-E2_ATPase"/>
    <property type="match status" value="1"/>
</dbReference>
<dbReference type="Pfam" id="PF00702">
    <property type="entry name" value="Hydrolase"/>
    <property type="match status" value="1"/>
</dbReference>
<dbReference type="PRINTS" id="PR00119">
    <property type="entry name" value="CATATPASE"/>
</dbReference>
<dbReference type="SFLD" id="SFLDG00002">
    <property type="entry name" value="C1.7:_P-type_atpase_like"/>
    <property type="match status" value="1"/>
</dbReference>
<dbReference type="SFLD" id="SFLDF00027">
    <property type="entry name" value="p-type_atpase"/>
    <property type="match status" value="1"/>
</dbReference>
<dbReference type="SUPFAM" id="SSF81653">
    <property type="entry name" value="Calcium ATPase, transduction domain A"/>
    <property type="match status" value="1"/>
</dbReference>
<dbReference type="SUPFAM" id="SSF81665">
    <property type="entry name" value="Calcium ATPase, transmembrane domain M"/>
    <property type="match status" value="1"/>
</dbReference>
<dbReference type="SUPFAM" id="SSF56784">
    <property type="entry name" value="HAD-like"/>
    <property type="match status" value="1"/>
</dbReference>
<dbReference type="PROSITE" id="PS00154">
    <property type="entry name" value="ATPASE_E1_E2"/>
    <property type="match status" value="1"/>
</dbReference>